<reference key="1">
    <citation type="journal article" date="2000" name="Nature">
        <title>Sequence and analysis of chromosome 5 of the plant Arabidopsis thaliana.</title>
        <authorList>
            <person name="Tabata S."/>
            <person name="Kaneko T."/>
            <person name="Nakamura Y."/>
            <person name="Kotani H."/>
            <person name="Kato T."/>
            <person name="Asamizu E."/>
            <person name="Miyajima N."/>
            <person name="Sasamoto S."/>
            <person name="Kimura T."/>
            <person name="Hosouchi T."/>
            <person name="Kawashima K."/>
            <person name="Kohara M."/>
            <person name="Matsumoto M."/>
            <person name="Matsuno A."/>
            <person name="Muraki A."/>
            <person name="Nakayama S."/>
            <person name="Nakazaki N."/>
            <person name="Naruo K."/>
            <person name="Okumura S."/>
            <person name="Shinpo S."/>
            <person name="Takeuchi C."/>
            <person name="Wada T."/>
            <person name="Watanabe A."/>
            <person name="Yamada M."/>
            <person name="Yasuda M."/>
            <person name="Sato S."/>
            <person name="de la Bastide M."/>
            <person name="Huang E."/>
            <person name="Spiegel L."/>
            <person name="Gnoj L."/>
            <person name="O'Shaughnessy A."/>
            <person name="Preston R."/>
            <person name="Habermann K."/>
            <person name="Murray J."/>
            <person name="Johnson D."/>
            <person name="Rohlfing T."/>
            <person name="Nelson J."/>
            <person name="Stoneking T."/>
            <person name="Pepin K."/>
            <person name="Spieth J."/>
            <person name="Sekhon M."/>
            <person name="Armstrong J."/>
            <person name="Becker M."/>
            <person name="Belter E."/>
            <person name="Cordum H."/>
            <person name="Cordes M."/>
            <person name="Courtney L."/>
            <person name="Courtney W."/>
            <person name="Dante M."/>
            <person name="Du H."/>
            <person name="Edwards J."/>
            <person name="Fryman J."/>
            <person name="Haakensen B."/>
            <person name="Lamar E."/>
            <person name="Latreille P."/>
            <person name="Leonard S."/>
            <person name="Meyer R."/>
            <person name="Mulvaney E."/>
            <person name="Ozersky P."/>
            <person name="Riley A."/>
            <person name="Strowmatt C."/>
            <person name="Wagner-McPherson C."/>
            <person name="Wollam A."/>
            <person name="Yoakum M."/>
            <person name="Bell M."/>
            <person name="Dedhia N."/>
            <person name="Parnell L."/>
            <person name="Shah R."/>
            <person name="Rodriguez M."/>
            <person name="Hoon See L."/>
            <person name="Vil D."/>
            <person name="Baker J."/>
            <person name="Kirchoff K."/>
            <person name="Toth K."/>
            <person name="King L."/>
            <person name="Bahret A."/>
            <person name="Miller B."/>
            <person name="Marra M.A."/>
            <person name="Martienssen R."/>
            <person name="McCombie W.R."/>
            <person name="Wilson R.K."/>
            <person name="Murphy G."/>
            <person name="Bancroft I."/>
            <person name="Volckaert G."/>
            <person name="Wambutt R."/>
            <person name="Duesterhoeft A."/>
            <person name="Stiekema W."/>
            <person name="Pohl T."/>
            <person name="Entian K.-D."/>
            <person name="Terryn N."/>
            <person name="Hartley N."/>
            <person name="Bent E."/>
            <person name="Johnson S."/>
            <person name="Langham S.-A."/>
            <person name="McCullagh B."/>
            <person name="Robben J."/>
            <person name="Grymonprez B."/>
            <person name="Zimmermann W."/>
            <person name="Ramsperger U."/>
            <person name="Wedler H."/>
            <person name="Balke K."/>
            <person name="Wedler E."/>
            <person name="Peters S."/>
            <person name="van Staveren M."/>
            <person name="Dirkse W."/>
            <person name="Mooijman P."/>
            <person name="Klein Lankhorst R."/>
            <person name="Weitzenegger T."/>
            <person name="Bothe G."/>
            <person name="Rose M."/>
            <person name="Hauf J."/>
            <person name="Berneiser S."/>
            <person name="Hempel S."/>
            <person name="Feldpausch M."/>
            <person name="Lamberth S."/>
            <person name="Villarroel R."/>
            <person name="Gielen J."/>
            <person name="Ardiles W."/>
            <person name="Bents O."/>
            <person name="Lemcke K."/>
            <person name="Kolesov G."/>
            <person name="Mayer K.F.X."/>
            <person name="Rudd S."/>
            <person name="Schoof H."/>
            <person name="Schueller C."/>
            <person name="Zaccaria P."/>
            <person name="Mewes H.-W."/>
            <person name="Bevan M."/>
            <person name="Fransz P.F."/>
        </authorList>
    </citation>
    <scope>NUCLEOTIDE SEQUENCE [LARGE SCALE GENOMIC DNA]</scope>
    <source>
        <strain>cv. Columbia</strain>
    </source>
</reference>
<reference key="2">
    <citation type="journal article" date="2017" name="Plant J.">
        <title>Araport11: a complete reannotation of the Arabidopsis thaliana reference genome.</title>
        <authorList>
            <person name="Cheng C.Y."/>
            <person name="Krishnakumar V."/>
            <person name="Chan A.P."/>
            <person name="Thibaud-Nissen F."/>
            <person name="Schobel S."/>
            <person name="Town C.D."/>
        </authorList>
    </citation>
    <scope>GENOME REANNOTATION</scope>
    <source>
        <strain>cv. Columbia</strain>
    </source>
</reference>
<reference key="3">
    <citation type="journal article" date="2001" name="Plant Physiol.">
        <title>Phylogenetic relationships within cation transporter families of Arabidopsis.</title>
        <authorList>
            <person name="Maeser P."/>
            <person name="Thomine S."/>
            <person name="Schroeder J.I."/>
            <person name="Ward J.M."/>
            <person name="Hirschi K."/>
            <person name="Sze H."/>
            <person name="Talke I.N."/>
            <person name="Amtmann A."/>
            <person name="Maathuis F.J.M."/>
            <person name="Sanders D."/>
            <person name="Harper J.F."/>
            <person name="Tchieu J."/>
            <person name="Gribskov M."/>
            <person name="Persans M.W."/>
            <person name="Salt D.E."/>
            <person name="Kim S.A."/>
            <person name="Guerinot M.L."/>
        </authorList>
    </citation>
    <scope>GENE FAMILY</scope>
    <scope>NOMENCLATURE</scope>
</reference>
<reference key="4">
    <citation type="journal article" date="2004" name="Plant Physiol.">
        <title>Expression patterns of a novel AtCHX gene family highlight potential roles in osmotic adjustment and K+ homeostasis in pollen development.</title>
        <authorList>
            <person name="Sze H."/>
            <person name="Padmanaban S."/>
            <person name="Cellier F."/>
            <person name="Honys D."/>
            <person name="Cheng N.-H."/>
            <person name="Bock K.W."/>
            <person name="Conejero G."/>
            <person name="Li X."/>
            <person name="Twell D."/>
            <person name="Ward J.M."/>
            <person name="Hirschi K.D."/>
        </authorList>
    </citation>
    <scope>TISSUE SPECIFICITY</scope>
    <scope>GENE FAMILY</scope>
    <scope>NOMENCLATURE</scope>
</reference>
<gene>
    <name type="primary">CHX27</name>
    <name type="ordered locus">At5g01690</name>
    <name type="ORF">F7A7_210</name>
</gene>
<protein>
    <recommendedName>
        <fullName>Cation/H(+) antiporter 27</fullName>
    </recommendedName>
    <alternativeName>
        <fullName>Protein CATION/H+ EXCHANGER 27</fullName>
        <shortName>AtCHX27</shortName>
    </alternativeName>
</protein>
<evidence type="ECO:0000250" key="1"/>
<evidence type="ECO:0000255" key="2"/>
<evidence type="ECO:0000269" key="3">
    <source>
    </source>
</evidence>
<evidence type="ECO:0000305" key="4"/>
<name>CHX27_ARATH</name>
<sequence>MENITKTFQYGGVDWLCEPWVGAGSLGIGRGENPLKFALPLLLLQISVFSIFSVSFQFLLRPFGKFAFLTQMLAGICLGPSVIGRNKQYMATFFYARSVYIIESFEAICFLFICYITTCQVDTRMIKRVGKLAFINGILLFLIPFVWGQFAAILISKRLKSGPAGIPPVEFHHVAIVQSTMFFQVVYGVLSSLKMLNTEPGRLALASMMVHDCLSWCFFMLNIAIKLNVDLPNKNRAAFLSVLQMIMILVIAYVFRPLMLWMKNRTPEGHSLKASYLSVICVLLFISCLWAEFVGLPYFFGAVVLGLATPKRPPLGTGLSDKIGCFVWSVLMPCYVIGIGLNIDLSLFSWRDVIRFELLFGVVRFAKMIAIALPSLYYKVPLWHAILVGFIVNIQGLYDVQIYKQNFNYTKISSKSFGAMVMSATVNSTIFIVIVKKLYQTMSKRNPYKRRTVQHCRVEAPLRILTCFRNREAVRPVLDLVELSRPAIGSPLSVFAVNLEELNNHSLPLLIHHTQEISPFLVPSRRDQIVKAFHNFEKTNQETVLIECFTAVAPRKTMHEDVCAIAFDQETDIVILTLDAGIELWERLLCRNLLHNCPCSVALFIDRGRLPDFRFVPLKKLTINIGAIFLGGPDDREMLAYATRLASHPSVELQVFRLVDQNGVSPLRDMVERNHDMRVINVFRKENSEKNIIFREVRIEEAVNLLDLLRKEGDDFDLMMVGIRHEENLLMLEGLSEWSDMKELGEVGDVLISKDLELSVSVLAVQQ</sequence>
<comment type="function">
    <text evidence="1">May operate as a cation/H(+) antiporter.</text>
</comment>
<comment type="subcellular location">
    <subcellularLocation>
        <location evidence="1">Membrane</location>
        <topology evidence="1">Multi-pass membrane protein</topology>
    </subcellularLocation>
</comment>
<comment type="tissue specificity">
    <text evidence="3">Specifically expressed in pollen.</text>
</comment>
<comment type="similarity">
    <text evidence="4">Belongs to the monovalent cation:proton antiporter 2 (CPA2) transporter (TC 2.A.37) family. CHX (TC 2.A.37.4) subfamily.</text>
</comment>
<comment type="sequence caution" evidence="4">
    <conflict type="erroneous gene model prediction">
        <sequence resource="EMBL-CDS" id="CAB82285"/>
    </conflict>
</comment>
<dbReference type="EMBL" id="AL161946">
    <property type="protein sequence ID" value="CAB82285.1"/>
    <property type="status" value="ALT_SEQ"/>
    <property type="molecule type" value="Genomic_DNA"/>
</dbReference>
<dbReference type="EMBL" id="CP002688">
    <property type="protein sequence ID" value="AED90377.2"/>
    <property type="molecule type" value="Genomic_DNA"/>
</dbReference>
<dbReference type="PIR" id="T48190">
    <property type="entry name" value="T48190"/>
</dbReference>
<dbReference type="RefSeq" id="NP_001318455.1">
    <property type="nucleotide sequence ID" value="NM_001342606.1"/>
</dbReference>
<dbReference type="SMR" id="Q9M007"/>
<dbReference type="BioGRID" id="15739">
    <property type="interactions" value="12"/>
</dbReference>
<dbReference type="IntAct" id="Q9M007">
    <property type="interactions" value="12"/>
</dbReference>
<dbReference type="ProteomicsDB" id="246884"/>
<dbReference type="EnsemblPlants" id="AT5G01690.1">
    <property type="protein sequence ID" value="AT5G01690.1"/>
    <property type="gene ID" value="AT5G01690"/>
</dbReference>
<dbReference type="GeneID" id="830460"/>
<dbReference type="Gramene" id="AT5G01690.1">
    <property type="protein sequence ID" value="AT5G01690.1"/>
    <property type="gene ID" value="AT5G01690"/>
</dbReference>
<dbReference type="KEGG" id="ath:AT5G01690"/>
<dbReference type="Araport" id="AT5G01690"/>
<dbReference type="TAIR" id="AT5G01690">
    <property type="gene designation" value="CHX27"/>
</dbReference>
<dbReference type="eggNOG" id="KOG1650">
    <property type="taxonomic scope" value="Eukaryota"/>
</dbReference>
<dbReference type="InParanoid" id="Q9M007"/>
<dbReference type="OMA" id="FICYITT"/>
<dbReference type="OrthoDB" id="1868135at2759"/>
<dbReference type="PhylomeDB" id="Q9M007"/>
<dbReference type="PRO" id="PR:Q9M007"/>
<dbReference type="Proteomes" id="UP000006548">
    <property type="component" value="Chromosome 5"/>
</dbReference>
<dbReference type="ExpressionAtlas" id="Q9M007">
    <property type="expression patterns" value="baseline and differential"/>
</dbReference>
<dbReference type="GO" id="GO:0016020">
    <property type="term" value="C:membrane"/>
    <property type="evidence" value="ECO:0007669"/>
    <property type="project" value="UniProtKB-SubCell"/>
</dbReference>
<dbReference type="GO" id="GO:0015297">
    <property type="term" value="F:antiporter activity"/>
    <property type="evidence" value="ECO:0007669"/>
    <property type="project" value="UniProtKB-KW"/>
</dbReference>
<dbReference type="GO" id="GO:0006813">
    <property type="term" value="P:potassium ion transport"/>
    <property type="evidence" value="ECO:0007669"/>
    <property type="project" value="UniProtKB-KW"/>
</dbReference>
<dbReference type="GO" id="GO:1902600">
    <property type="term" value="P:proton transmembrane transport"/>
    <property type="evidence" value="ECO:0007669"/>
    <property type="project" value="InterPro"/>
</dbReference>
<dbReference type="FunFam" id="1.20.1530.20:FF:000022">
    <property type="entry name" value="Cation/H(+) antiporter 24"/>
    <property type="match status" value="1"/>
</dbReference>
<dbReference type="Gene3D" id="1.20.1530.20">
    <property type="match status" value="1"/>
</dbReference>
<dbReference type="InterPro" id="IPR006153">
    <property type="entry name" value="Cation/H_exchanger_TM"/>
</dbReference>
<dbReference type="InterPro" id="IPR050794">
    <property type="entry name" value="CPA2_transporter"/>
</dbReference>
<dbReference type="InterPro" id="IPR038770">
    <property type="entry name" value="Na+/solute_symporter_sf"/>
</dbReference>
<dbReference type="PANTHER" id="PTHR32468">
    <property type="entry name" value="CATION/H + ANTIPORTER"/>
    <property type="match status" value="1"/>
</dbReference>
<dbReference type="PANTHER" id="PTHR32468:SF96">
    <property type="entry name" value="CATION_H(+) ANTIPORTER 26-RELATED"/>
    <property type="match status" value="1"/>
</dbReference>
<dbReference type="Pfam" id="PF23259">
    <property type="entry name" value="CHX17_C"/>
    <property type="match status" value="1"/>
</dbReference>
<dbReference type="Pfam" id="PF00999">
    <property type="entry name" value="Na_H_Exchanger"/>
    <property type="match status" value="1"/>
</dbReference>
<proteinExistence type="evidence at transcript level"/>
<keyword id="KW-0050">Antiport</keyword>
<keyword id="KW-0406">Ion transport</keyword>
<keyword id="KW-0472">Membrane</keyword>
<keyword id="KW-0630">Potassium</keyword>
<keyword id="KW-0633">Potassium transport</keyword>
<keyword id="KW-1185">Reference proteome</keyword>
<keyword id="KW-0812">Transmembrane</keyword>
<keyword id="KW-1133">Transmembrane helix</keyword>
<keyword id="KW-0813">Transport</keyword>
<organism>
    <name type="scientific">Arabidopsis thaliana</name>
    <name type="common">Mouse-ear cress</name>
    <dbReference type="NCBI Taxonomy" id="3702"/>
    <lineage>
        <taxon>Eukaryota</taxon>
        <taxon>Viridiplantae</taxon>
        <taxon>Streptophyta</taxon>
        <taxon>Embryophyta</taxon>
        <taxon>Tracheophyta</taxon>
        <taxon>Spermatophyta</taxon>
        <taxon>Magnoliopsida</taxon>
        <taxon>eudicotyledons</taxon>
        <taxon>Gunneridae</taxon>
        <taxon>Pentapetalae</taxon>
        <taxon>rosids</taxon>
        <taxon>malvids</taxon>
        <taxon>Brassicales</taxon>
        <taxon>Brassicaceae</taxon>
        <taxon>Camelineae</taxon>
        <taxon>Arabidopsis</taxon>
    </lineage>
</organism>
<feature type="chain" id="PRO_0000394996" description="Cation/H(+) antiporter 27">
    <location>
        <begin position="1"/>
        <end position="767"/>
    </location>
</feature>
<feature type="transmembrane region" description="Helical" evidence="2">
    <location>
        <begin position="39"/>
        <end position="59"/>
    </location>
</feature>
<feature type="transmembrane region" description="Helical" evidence="2">
    <location>
        <begin position="63"/>
        <end position="83"/>
    </location>
</feature>
<feature type="transmembrane region" description="Helical" evidence="2">
    <location>
        <begin position="99"/>
        <end position="119"/>
    </location>
</feature>
<feature type="transmembrane region" description="Helical" evidence="2">
    <location>
        <begin position="135"/>
        <end position="155"/>
    </location>
</feature>
<feature type="transmembrane region" description="Helical" evidence="2">
    <location>
        <begin position="173"/>
        <end position="193"/>
    </location>
</feature>
<feature type="transmembrane region" description="Helical" evidence="2">
    <location>
        <begin position="205"/>
        <end position="225"/>
    </location>
</feature>
<feature type="transmembrane region" description="Helical" evidence="2">
    <location>
        <begin position="242"/>
        <end position="262"/>
    </location>
</feature>
<feature type="transmembrane region" description="Helical" evidence="2">
    <location>
        <begin position="280"/>
        <end position="300"/>
    </location>
</feature>
<feature type="transmembrane region" description="Helical" evidence="2">
    <location>
        <begin position="323"/>
        <end position="343"/>
    </location>
</feature>
<feature type="transmembrane region" description="Helical" evidence="2">
    <location>
        <begin position="371"/>
        <end position="391"/>
    </location>
</feature>
<feature type="transmembrane region" description="Helical" evidence="2">
    <location>
        <begin position="415"/>
        <end position="435"/>
    </location>
</feature>
<accession>Q9M007</accession>
<accession>F4K9H0</accession>